<name>PYRI_ARCFU</name>
<proteinExistence type="inferred from homology"/>
<accession>O30129</accession>
<gene>
    <name type="primary">pyrI</name>
    <name type="ordered locus">AF_0107</name>
</gene>
<dbReference type="EMBL" id="AE000782">
    <property type="protein sequence ID" value="AAB91124.1"/>
    <property type="molecule type" value="Genomic_DNA"/>
</dbReference>
<dbReference type="PIR" id="C69263">
    <property type="entry name" value="C69263"/>
</dbReference>
<dbReference type="RefSeq" id="WP_010877621.1">
    <property type="nucleotide sequence ID" value="NC_000917.1"/>
</dbReference>
<dbReference type="SMR" id="O30129"/>
<dbReference type="STRING" id="224325.AF_0107"/>
<dbReference type="PaxDb" id="224325-AF_0107"/>
<dbReference type="EnsemblBacteria" id="AAB91124">
    <property type="protein sequence ID" value="AAB91124"/>
    <property type="gene ID" value="AF_0107"/>
</dbReference>
<dbReference type="GeneID" id="24793661"/>
<dbReference type="KEGG" id="afu:AF_0107"/>
<dbReference type="eggNOG" id="arCOG04229">
    <property type="taxonomic scope" value="Archaea"/>
</dbReference>
<dbReference type="HOGENOM" id="CLU_128576_0_0_2"/>
<dbReference type="OrthoDB" id="7000at2157"/>
<dbReference type="PhylomeDB" id="O30129"/>
<dbReference type="Proteomes" id="UP000002199">
    <property type="component" value="Chromosome"/>
</dbReference>
<dbReference type="GO" id="GO:0009347">
    <property type="term" value="C:aspartate carbamoyltransferase complex"/>
    <property type="evidence" value="ECO:0007669"/>
    <property type="project" value="InterPro"/>
</dbReference>
<dbReference type="GO" id="GO:0046872">
    <property type="term" value="F:metal ion binding"/>
    <property type="evidence" value="ECO:0007669"/>
    <property type="project" value="UniProtKB-KW"/>
</dbReference>
<dbReference type="GO" id="GO:0006207">
    <property type="term" value="P:'de novo' pyrimidine nucleobase biosynthetic process"/>
    <property type="evidence" value="ECO:0007669"/>
    <property type="project" value="InterPro"/>
</dbReference>
<dbReference type="GO" id="GO:0006221">
    <property type="term" value="P:pyrimidine nucleotide biosynthetic process"/>
    <property type="evidence" value="ECO:0007669"/>
    <property type="project" value="UniProtKB-UniRule"/>
</dbReference>
<dbReference type="Gene3D" id="2.30.30.20">
    <property type="entry name" value="Aspartate carbamoyltransferase regulatory subunit, C-terminal domain"/>
    <property type="match status" value="1"/>
</dbReference>
<dbReference type="Gene3D" id="3.30.70.140">
    <property type="entry name" value="Aspartate carbamoyltransferase regulatory subunit, N-terminal domain"/>
    <property type="match status" value="1"/>
</dbReference>
<dbReference type="HAMAP" id="MF_00002">
    <property type="entry name" value="Asp_carb_tr_reg"/>
    <property type="match status" value="1"/>
</dbReference>
<dbReference type="InterPro" id="IPR020545">
    <property type="entry name" value="Asp_carbamoyltransf_reg_N"/>
</dbReference>
<dbReference type="InterPro" id="IPR002801">
    <property type="entry name" value="Asp_carbamoylTrfase_reg"/>
</dbReference>
<dbReference type="InterPro" id="IPR020542">
    <property type="entry name" value="Asp_carbamoyltrfase_reg_C"/>
</dbReference>
<dbReference type="InterPro" id="IPR036792">
    <property type="entry name" value="Asp_carbatrfase_reg_C_sf"/>
</dbReference>
<dbReference type="InterPro" id="IPR036793">
    <property type="entry name" value="Asp_carbatrfase_reg_N_sf"/>
</dbReference>
<dbReference type="NCBIfam" id="TIGR00240">
    <property type="entry name" value="ATCase_reg"/>
    <property type="match status" value="1"/>
</dbReference>
<dbReference type="PANTHER" id="PTHR35805">
    <property type="entry name" value="ASPARTATE CARBAMOYLTRANSFERASE REGULATORY CHAIN"/>
    <property type="match status" value="1"/>
</dbReference>
<dbReference type="PANTHER" id="PTHR35805:SF1">
    <property type="entry name" value="ASPARTATE CARBAMOYLTRANSFERASE REGULATORY CHAIN"/>
    <property type="match status" value="1"/>
</dbReference>
<dbReference type="Pfam" id="PF01948">
    <property type="entry name" value="PyrI"/>
    <property type="match status" value="1"/>
</dbReference>
<dbReference type="Pfam" id="PF02748">
    <property type="entry name" value="PyrI_C"/>
    <property type="match status" value="1"/>
</dbReference>
<dbReference type="SUPFAM" id="SSF57825">
    <property type="entry name" value="Aspartate carbamoyltransferase, Regulatory-chain, C-terminal domain"/>
    <property type="match status" value="1"/>
</dbReference>
<dbReference type="SUPFAM" id="SSF54893">
    <property type="entry name" value="Aspartate carbamoyltransferase, Regulatory-chain, N-terminal domain"/>
    <property type="match status" value="1"/>
</dbReference>
<keyword id="KW-0479">Metal-binding</keyword>
<keyword id="KW-0665">Pyrimidine biosynthesis</keyword>
<keyword id="KW-1185">Reference proteome</keyword>
<keyword id="KW-0862">Zinc</keyword>
<sequence length="153" mass="17255">MRELVVSKIKEGTVIDHINAGKALLVLKILKIQPGTDLTVSMAMNVPSSKMGKKDIVKVEGMFIRDEELNKIALISPNATINLIRDYEIERKFKVSPPEVVEGVLKCPNHACISNAEREPITPKFYIKTEEMRATARCHYCGRKIENLDNYIS</sequence>
<comment type="function">
    <text evidence="1">Involved in allosteric regulation of aspartate carbamoyltransferase.</text>
</comment>
<comment type="cofactor">
    <cofactor evidence="1">
        <name>Zn(2+)</name>
        <dbReference type="ChEBI" id="CHEBI:29105"/>
    </cofactor>
    <text evidence="1">Binds 1 zinc ion per subunit.</text>
</comment>
<comment type="subunit">
    <text evidence="1">Contains catalytic and regulatory chains.</text>
</comment>
<comment type="similarity">
    <text evidence="2">Belongs to the PyrI family.</text>
</comment>
<evidence type="ECO:0000250" key="1"/>
<evidence type="ECO:0000305" key="2"/>
<feature type="chain" id="PRO_0000142327" description="Aspartate carbamoyltransferase regulatory chain">
    <location>
        <begin position="1"/>
        <end position="153"/>
    </location>
</feature>
<feature type="binding site" evidence="1">
    <location>
        <position position="107"/>
    </location>
    <ligand>
        <name>Zn(2+)</name>
        <dbReference type="ChEBI" id="CHEBI:29105"/>
    </ligand>
</feature>
<feature type="binding site" evidence="1">
    <location>
        <position position="112"/>
    </location>
    <ligand>
        <name>Zn(2+)</name>
        <dbReference type="ChEBI" id="CHEBI:29105"/>
    </ligand>
</feature>
<feature type="binding site" evidence="1">
    <location>
        <position position="138"/>
    </location>
    <ligand>
        <name>Zn(2+)</name>
        <dbReference type="ChEBI" id="CHEBI:29105"/>
    </ligand>
</feature>
<feature type="binding site" evidence="1">
    <location>
        <position position="141"/>
    </location>
    <ligand>
        <name>Zn(2+)</name>
        <dbReference type="ChEBI" id="CHEBI:29105"/>
    </ligand>
</feature>
<organism>
    <name type="scientific">Archaeoglobus fulgidus (strain ATCC 49558 / DSM 4304 / JCM 9628 / NBRC 100126 / VC-16)</name>
    <dbReference type="NCBI Taxonomy" id="224325"/>
    <lineage>
        <taxon>Archaea</taxon>
        <taxon>Methanobacteriati</taxon>
        <taxon>Methanobacteriota</taxon>
        <taxon>Archaeoglobi</taxon>
        <taxon>Archaeoglobales</taxon>
        <taxon>Archaeoglobaceae</taxon>
        <taxon>Archaeoglobus</taxon>
    </lineage>
</organism>
<reference key="1">
    <citation type="journal article" date="1997" name="Nature">
        <title>The complete genome sequence of the hyperthermophilic, sulphate-reducing archaeon Archaeoglobus fulgidus.</title>
        <authorList>
            <person name="Klenk H.-P."/>
            <person name="Clayton R.A."/>
            <person name="Tomb J.-F."/>
            <person name="White O."/>
            <person name="Nelson K.E."/>
            <person name="Ketchum K.A."/>
            <person name="Dodson R.J."/>
            <person name="Gwinn M.L."/>
            <person name="Hickey E.K."/>
            <person name="Peterson J.D."/>
            <person name="Richardson D.L."/>
            <person name="Kerlavage A.R."/>
            <person name="Graham D.E."/>
            <person name="Kyrpides N.C."/>
            <person name="Fleischmann R.D."/>
            <person name="Quackenbush J."/>
            <person name="Lee N.H."/>
            <person name="Sutton G.G."/>
            <person name="Gill S.R."/>
            <person name="Kirkness E.F."/>
            <person name="Dougherty B.A."/>
            <person name="McKenney K."/>
            <person name="Adams M.D."/>
            <person name="Loftus B.J."/>
            <person name="Peterson S.N."/>
            <person name="Reich C.I."/>
            <person name="McNeil L.K."/>
            <person name="Badger J.H."/>
            <person name="Glodek A."/>
            <person name="Zhou L."/>
            <person name="Overbeek R."/>
            <person name="Gocayne J.D."/>
            <person name="Weidman J.F."/>
            <person name="McDonald L.A."/>
            <person name="Utterback T.R."/>
            <person name="Cotton M.D."/>
            <person name="Spriggs T."/>
            <person name="Artiach P."/>
            <person name="Kaine B.P."/>
            <person name="Sykes S.M."/>
            <person name="Sadow P.W."/>
            <person name="D'Andrea K.P."/>
            <person name="Bowman C."/>
            <person name="Fujii C."/>
            <person name="Garland S.A."/>
            <person name="Mason T.M."/>
            <person name="Olsen G.J."/>
            <person name="Fraser C.M."/>
            <person name="Smith H.O."/>
            <person name="Woese C.R."/>
            <person name="Venter J.C."/>
        </authorList>
    </citation>
    <scope>NUCLEOTIDE SEQUENCE [LARGE SCALE GENOMIC DNA]</scope>
    <source>
        <strain>ATCC 49558 / DSM 4304 / JCM 9628 / NBRC 100126 / VC-16</strain>
    </source>
</reference>
<protein>
    <recommendedName>
        <fullName>Aspartate carbamoyltransferase regulatory chain</fullName>
    </recommendedName>
</protein>